<name>SECA_CLOBH</name>
<keyword id="KW-0067">ATP-binding</keyword>
<keyword id="KW-1003">Cell membrane</keyword>
<keyword id="KW-0963">Cytoplasm</keyword>
<keyword id="KW-0472">Membrane</keyword>
<keyword id="KW-0479">Metal-binding</keyword>
<keyword id="KW-0547">Nucleotide-binding</keyword>
<keyword id="KW-0653">Protein transport</keyword>
<keyword id="KW-1185">Reference proteome</keyword>
<keyword id="KW-1278">Translocase</keyword>
<keyword id="KW-0811">Translocation</keyword>
<keyword id="KW-0813">Transport</keyword>
<keyword id="KW-0862">Zinc</keyword>
<accession>A5HY67</accession>
<accession>A7G087</accession>
<sequence>MGILNKIFGTYSERELRRVNPIVNKIEALDEKMQSLKDEDFKLKTEEFKSRLEKGEKLDDILPEAFALVREAAHRTIGLKHYREQLIGGVVLHQGRIGEMKTGEGKTLVATLPAYVNALTGKGVHIVTVNDYLAKRDRDLMAPVYEFLGLKVGVILHNLNNEERQEAYGSDITYGTNSEFGFDYLRDNMVVYKEERVQRKLNFSIVDEVDSILIDEARTPLIISGQGEKSTEFYKVADYFTKSLIAEKDFTIDEKANSAMLTDEGVNKAENFFKVDNYADAENMEIQHHVVQALKANYVMKKDKDYMIKDGEILIVDEFTGRAMEGRRYSDGLHQAIEAKEGVRVERESKTLATITYQNYFRMYNKLSGMTGTAQTEENEFREIYGLDVIVIPTHEPIARIDNADVVYKSEKGKFKAIVDEIVERYKKGQPMLVGTVSIEKSEMLSSMLKKKGVPHQVLNAKYHEKEAEIISHAGEYGMVTIATNMAGRGTDIKLTKEAEEAGGLMIIGTERHESRRIDNQLRGRSGRQGDPGESRFFVSLEDDLMRIFGSERIQGIVDKLGLAEDEAIESKMVSSAIESAQKKVEGNNFDIRKTLLQYDDVINKQREIIYKQRSEVLEGEDLKDQIRDMIRDVVYTAVNSHISGVEEEFQTELQNLVNYLEDICLPKALVKVKDISNLSDEEIKEKLLEAVENIYIRKEKEIGEEQIREIERVILLRVVDTKWMDHIDDMDHLKQGIGLRAYRQQDPVQAYQFEGSEMFEEMIYNIKVDTVRYLFHVEVEKAPEREKVAKETSTNYDEDSVKKQPIKKENRIGRNDMCPCGSGKKYKNCCGRMA</sequence>
<proteinExistence type="inferred from homology"/>
<comment type="function">
    <text evidence="1">Part of the Sec protein translocase complex. Interacts with the SecYEG preprotein conducting channel. Has a central role in coupling the hydrolysis of ATP to the transfer of proteins into and across the cell membrane, serving as an ATP-driven molecular motor driving the stepwise translocation of polypeptide chains across the membrane.</text>
</comment>
<comment type="catalytic activity">
    <reaction evidence="1">
        <text>ATP + H2O + cellular proteinSide 1 = ADP + phosphate + cellular proteinSide 2.</text>
        <dbReference type="EC" id="7.4.2.8"/>
    </reaction>
</comment>
<comment type="cofactor">
    <cofactor evidence="1">
        <name>Zn(2+)</name>
        <dbReference type="ChEBI" id="CHEBI:29105"/>
    </cofactor>
    <text evidence="1">May bind 1 zinc ion per subunit.</text>
</comment>
<comment type="subunit">
    <text evidence="1">Monomer and homodimer. Part of the essential Sec protein translocation apparatus which comprises SecA, SecYEG and auxiliary proteins SecDF. Other proteins may also be involved.</text>
</comment>
<comment type="subcellular location">
    <subcellularLocation>
        <location evidence="1">Cell membrane</location>
        <topology evidence="1">Peripheral membrane protein</topology>
        <orientation evidence="1">Cytoplasmic side</orientation>
    </subcellularLocation>
    <subcellularLocation>
        <location evidence="1">Cytoplasm</location>
    </subcellularLocation>
    <text evidence="1">Distribution is 50-50.</text>
</comment>
<comment type="similarity">
    <text evidence="1">Belongs to the SecA family.</text>
</comment>
<evidence type="ECO:0000255" key="1">
    <source>
        <dbReference type="HAMAP-Rule" id="MF_01382"/>
    </source>
</evidence>
<gene>
    <name evidence="1" type="primary">secA</name>
    <name type="ordered locus">CBO0173</name>
    <name type="ordered locus">CLC_0227</name>
</gene>
<dbReference type="EC" id="7.4.2.8" evidence="1"/>
<dbReference type="EMBL" id="CP000727">
    <property type="protein sequence ID" value="ABS37021.1"/>
    <property type="molecule type" value="Genomic_DNA"/>
</dbReference>
<dbReference type="EMBL" id="AM412317">
    <property type="protein sequence ID" value="CAL81726.1"/>
    <property type="molecule type" value="Genomic_DNA"/>
</dbReference>
<dbReference type="RefSeq" id="WP_011947996.1">
    <property type="nucleotide sequence ID" value="NC_009698.1"/>
</dbReference>
<dbReference type="RefSeq" id="YP_001252718.1">
    <property type="nucleotide sequence ID" value="NC_009495.1"/>
</dbReference>
<dbReference type="RefSeq" id="YP_001386130.1">
    <property type="nucleotide sequence ID" value="NC_009698.1"/>
</dbReference>
<dbReference type="SMR" id="A5HY67"/>
<dbReference type="GeneID" id="5184428"/>
<dbReference type="KEGG" id="cbh:CLC_0227"/>
<dbReference type="KEGG" id="cbo:CBO0173"/>
<dbReference type="PATRIC" id="fig|413999.7.peg.170"/>
<dbReference type="HOGENOM" id="CLU_005314_3_0_9"/>
<dbReference type="PRO" id="PR:A5HY67"/>
<dbReference type="Proteomes" id="UP000001986">
    <property type="component" value="Chromosome"/>
</dbReference>
<dbReference type="GO" id="GO:0031522">
    <property type="term" value="C:cell envelope Sec protein transport complex"/>
    <property type="evidence" value="ECO:0000318"/>
    <property type="project" value="GO_Central"/>
</dbReference>
<dbReference type="GO" id="GO:0005737">
    <property type="term" value="C:cytoplasm"/>
    <property type="evidence" value="ECO:0007669"/>
    <property type="project" value="UniProtKB-SubCell"/>
</dbReference>
<dbReference type="GO" id="GO:0005886">
    <property type="term" value="C:plasma membrane"/>
    <property type="evidence" value="ECO:0000318"/>
    <property type="project" value="GO_Central"/>
</dbReference>
<dbReference type="GO" id="GO:0005524">
    <property type="term" value="F:ATP binding"/>
    <property type="evidence" value="ECO:0000318"/>
    <property type="project" value="GO_Central"/>
</dbReference>
<dbReference type="GO" id="GO:0046872">
    <property type="term" value="F:metal ion binding"/>
    <property type="evidence" value="ECO:0007669"/>
    <property type="project" value="UniProtKB-KW"/>
</dbReference>
<dbReference type="GO" id="GO:0008564">
    <property type="term" value="F:protein-exporting ATPase activity"/>
    <property type="evidence" value="ECO:0007669"/>
    <property type="project" value="UniProtKB-EC"/>
</dbReference>
<dbReference type="GO" id="GO:0065002">
    <property type="term" value="P:intracellular protein transmembrane transport"/>
    <property type="evidence" value="ECO:0007669"/>
    <property type="project" value="UniProtKB-UniRule"/>
</dbReference>
<dbReference type="GO" id="GO:0017038">
    <property type="term" value="P:protein import"/>
    <property type="evidence" value="ECO:0007669"/>
    <property type="project" value="InterPro"/>
</dbReference>
<dbReference type="GO" id="GO:0006605">
    <property type="term" value="P:protein targeting"/>
    <property type="evidence" value="ECO:0007669"/>
    <property type="project" value="UniProtKB-UniRule"/>
</dbReference>
<dbReference type="GO" id="GO:0043952">
    <property type="term" value="P:protein transport by the Sec complex"/>
    <property type="evidence" value="ECO:0000318"/>
    <property type="project" value="GO_Central"/>
</dbReference>
<dbReference type="CDD" id="cd17928">
    <property type="entry name" value="DEXDc_SecA"/>
    <property type="match status" value="1"/>
</dbReference>
<dbReference type="CDD" id="cd18803">
    <property type="entry name" value="SF2_C_secA"/>
    <property type="match status" value="1"/>
</dbReference>
<dbReference type="FunFam" id="1.10.3060.10:FF:000002">
    <property type="entry name" value="Preprotein translocase subunit SecA"/>
    <property type="match status" value="1"/>
</dbReference>
<dbReference type="FunFam" id="3.40.50.300:FF:000694">
    <property type="entry name" value="Preprotein translocase subunit SecA"/>
    <property type="match status" value="1"/>
</dbReference>
<dbReference type="FunFam" id="3.90.1440.10:FF:000001">
    <property type="entry name" value="Preprotein translocase subunit SecA"/>
    <property type="match status" value="1"/>
</dbReference>
<dbReference type="Gene3D" id="1.10.3060.10">
    <property type="entry name" value="Helical scaffold and wing domains of SecA"/>
    <property type="match status" value="1"/>
</dbReference>
<dbReference type="Gene3D" id="3.40.50.300">
    <property type="entry name" value="P-loop containing nucleotide triphosphate hydrolases"/>
    <property type="match status" value="3"/>
</dbReference>
<dbReference type="Gene3D" id="3.90.1440.10">
    <property type="entry name" value="SecA, preprotein cross-linking domain"/>
    <property type="match status" value="1"/>
</dbReference>
<dbReference type="HAMAP" id="MF_01382">
    <property type="entry name" value="SecA"/>
    <property type="match status" value="1"/>
</dbReference>
<dbReference type="InterPro" id="IPR014001">
    <property type="entry name" value="Helicase_ATP-bd"/>
</dbReference>
<dbReference type="InterPro" id="IPR001650">
    <property type="entry name" value="Helicase_C-like"/>
</dbReference>
<dbReference type="InterPro" id="IPR027417">
    <property type="entry name" value="P-loop_NTPase"/>
</dbReference>
<dbReference type="InterPro" id="IPR004027">
    <property type="entry name" value="SEC_C_motif"/>
</dbReference>
<dbReference type="InterPro" id="IPR000185">
    <property type="entry name" value="SecA"/>
</dbReference>
<dbReference type="InterPro" id="IPR020937">
    <property type="entry name" value="SecA_CS"/>
</dbReference>
<dbReference type="InterPro" id="IPR011115">
    <property type="entry name" value="SecA_DEAD"/>
</dbReference>
<dbReference type="InterPro" id="IPR014018">
    <property type="entry name" value="SecA_motor_DEAD"/>
</dbReference>
<dbReference type="InterPro" id="IPR011130">
    <property type="entry name" value="SecA_preprotein_X-link_dom"/>
</dbReference>
<dbReference type="InterPro" id="IPR044722">
    <property type="entry name" value="SecA_SF2_C"/>
</dbReference>
<dbReference type="InterPro" id="IPR011116">
    <property type="entry name" value="SecA_Wing/Scaffold"/>
</dbReference>
<dbReference type="InterPro" id="IPR036266">
    <property type="entry name" value="SecA_Wing/Scaffold_sf"/>
</dbReference>
<dbReference type="InterPro" id="IPR036670">
    <property type="entry name" value="SecA_X-link_sf"/>
</dbReference>
<dbReference type="NCBIfam" id="NF006630">
    <property type="entry name" value="PRK09200.1"/>
    <property type="match status" value="1"/>
</dbReference>
<dbReference type="NCBIfam" id="NF009538">
    <property type="entry name" value="PRK12904.1"/>
    <property type="match status" value="1"/>
</dbReference>
<dbReference type="NCBIfam" id="TIGR00963">
    <property type="entry name" value="secA"/>
    <property type="match status" value="1"/>
</dbReference>
<dbReference type="PANTHER" id="PTHR30612:SF0">
    <property type="entry name" value="CHLOROPLAST PROTEIN-TRANSPORTING ATPASE"/>
    <property type="match status" value="1"/>
</dbReference>
<dbReference type="PANTHER" id="PTHR30612">
    <property type="entry name" value="SECA INNER MEMBRANE COMPONENT OF SEC PROTEIN SECRETION SYSTEM"/>
    <property type="match status" value="1"/>
</dbReference>
<dbReference type="Pfam" id="PF21090">
    <property type="entry name" value="P-loop_SecA"/>
    <property type="match status" value="1"/>
</dbReference>
<dbReference type="Pfam" id="PF02810">
    <property type="entry name" value="SEC-C"/>
    <property type="match status" value="1"/>
</dbReference>
<dbReference type="Pfam" id="PF07517">
    <property type="entry name" value="SecA_DEAD"/>
    <property type="match status" value="1"/>
</dbReference>
<dbReference type="Pfam" id="PF01043">
    <property type="entry name" value="SecA_PP_bind"/>
    <property type="match status" value="1"/>
</dbReference>
<dbReference type="Pfam" id="PF07516">
    <property type="entry name" value="SecA_SW"/>
    <property type="match status" value="1"/>
</dbReference>
<dbReference type="PRINTS" id="PR00906">
    <property type="entry name" value="SECA"/>
</dbReference>
<dbReference type="SMART" id="SM00957">
    <property type="entry name" value="SecA_DEAD"/>
    <property type="match status" value="1"/>
</dbReference>
<dbReference type="SMART" id="SM00958">
    <property type="entry name" value="SecA_PP_bind"/>
    <property type="match status" value="1"/>
</dbReference>
<dbReference type="SUPFAM" id="SSF81886">
    <property type="entry name" value="Helical scaffold and wing domains of SecA"/>
    <property type="match status" value="1"/>
</dbReference>
<dbReference type="SUPFAM" id="SSF52540">
    <property type="entry name" value="P-loop containing nucleoside triphosphate hydrolases"/>
    <property type="match status" value="2"/>
</dbReference>
<dbReference type="SUPFAM" id="SSF81767">
    <property type="entry name" value="Pre-protein crosslinking domain of SecA"/>
    <property type="match status" value="1"/>
</dbReference>
<dbReference type="PROSITE" id="PS01312">
    <property type="entry name" value="SECA"/>
    <property type="match status" value="1"/>
</dbReference>
<dbReference type="PROSITE" id="PS51196">
    <property type="entry name" value="SECA_MOTOR_DEAD"/>
    <property type="match status" value="1"/>
</dbReference>
<feature type="chain" id="PRO_0000320777" description="Protein translocase subunit SecA">
    <location>
        <begin position="1"/>
        <end position="835"/>
    </location>
</feature>
<feature type="binding site" evidence="1">
    <location>
        <position position="85"/>
    </location>
    <ligand>
        <name>ATP</name>
        <dbReference type="ChEBI" id="CHEBI:30616"/>
    </ligand>
</feature>
<feature type="binding site" evidence="1">
    <location>
        <begin position="103"/>
        <end position="107"/>
    </location>
    <ligand>
        <name>ATP</name>
        <dbReference type="ChEBI" id="CHEBI:30616"/>
    </ligand>
</feature>
<feature type="binding site" evidence="1">
    <location>
        <position position="492"/>
    </location>
    <ligand>
        <name>ATP</name>
        <dbReference type="ChEBI" id="CHEBI:30616"/>
    </ligand>
</feature>
<feature type="binding site" evidence="1">
    <location>
        <position position="819"/>
    </location>
    <ligand>
        <name>Zn(2+)</name>
        <dbReference type="ChEBI" id="CHEBI:29105"/>
    </ligand>
</feature>
<feature type="binding site" evidence="1">
    <location>
        <position position="821"/>
    </location>
    <ligand>
        <name>Zn(2+)</name>
        <dbReference type="ChEBI" id="CHEBI:29105"/>
    </ligand>
</feature>
<feature type="binding site" evidence="1">
    <location>
        <position position="830"/>
    </location>
    <ligand>
        <name>Zn(2+)</name>
        <dbReference type="ChEBI" id="CHEBI:29105"/>
    </ligand>
</feature>
<feature type="binding site" evidence="1">
    <location>
        <position position="831"/>
    </location>
    <ligand>
        <name>Zn(2+)</name>
        <dbReference type="ChEBI" id="CHEBI:29105"/>
    </ligand>
</feature>
<reference key="1">
    <citation type="journal article" date="2007" name="Genome Res.">
        <title>Genome sequence of a proteolytic (Group I) Clostridium botulinum strain Hall A and comparative analysis of the clostridial genomes.</title>
        <authorList>
            <person name="Sebaihia M."/>
            <person name="Peck M.W."/>
            <person name="Minton N.P."/>
            <person name="Thomson N.R."/>
            <person name="Holden M.T.G."/>
            <person name="Mitchell W.J."/>
            <person name="Carter A.T."/>
            <person name="Bentley S.D."/>
            <person name="Mason D.R."/>
            <person name="Crossman L."/>
            <person name="Paul C.J."/>
            <person name="Ivens A."/>
            <person name="Wells-Bennik M.H.J."/>
            <person name="Davis I.J."/>
            <person name="Cerdeno-Tarraga A.M."/>
            <person name="Churcher C."/>
            <person name="Quail M.A."/>
            <person name="Chillingworth T."/>
            <person name="Feltwell T."/>
            <person name="Fraser A."/>
            <person name="Goodhead I."/>
            <person name="Hance Z."/>
            <person name="Jagels K."/>
            <person name="Larke N."/>
            <person name="Maddison M."/>
            <person name="Moule S."/>
            <person name="Mungall K."/>
            <person name="Norbertczak H."/>
            <person name="Rabbinowitsch E."/>
            <person name="Sanders M."/>
            <person name="Simmonds M."/>
            <person name="White B."/>
            <person name="Whithead S."/>
            <person name="Parkhill J."/>
        </authorList>
    </citation>
    <scope>NUCLEOTIDE SEQUENCE [LARGE SCALE GENOMIC DNA]</scope>
    <source>
        <strain>Hall / ATCC 3502 / NCTC 13319 / Type A</strain>
    </source>
</reference>
<reference key="2">
    <citation type="journal article" date="2007" name="PLoS ONE">
        <title>Analysis of the neurotoxin complex genes in Clostridium botulinum A1-A4 and B1 strains: BoNT/A3, /Ba4 and /B1 clusters are located within plasmids.</title>
        <authorList>
            <person name="Smith T.J."/>
            <person name="Hill K.K."/>
            <person name="Foley B.T."/>
            <person name="Detter J.C."/>
            <person name="Munk A.C."/>
            <person name="Bruce D.C."/>
            <person name="Doggett N.A."/>
            <person name="Smith L.A."/>
            <person name="Marks J.D."/>
            <person name="Xie G."/>
            <person name="Brettin T.S."/>
        </authorList>
    </citation>
    <scope>NUCLEOTIDE SEQUENCE [LARGE SCALE GENOMIC DNA]</scope>
    <source>
        <strain>Hall / ATCC 3502 / NCTC 13319 / Type A</strain>
    </source>
</reference>
<organism>
    <name type="scientific">Clostridium botulinum (strain Hall / ATCC 3502 / NCTC 13319 / Type A)</name>
    <dbReference type="NCBI Taxonomy" id="441771"/>
    <lineage>
        <taxon>Bacteria</taxon>
        <taxon>Bacillati</taxon>
        <taxon>Bacillota</taxon>
        <taxon>Clostridia</taxon>
        <taxon>Eubacteriales</taxon>
        <taxon>Clostridiaceae</taxon>
        <taxon>Clostridium</taxon>
    </lineage>
</organism>
<protein>
    <recommendedName>
        <fullName evidence="1">Protein translocase subunit SecA</fullName>
        <ecNumber evidence="1">7.4.2.8</ecNumber>
    </recommendedName>
</protein>